<evidence type="ECO:0000255" key="1">
    <source>
        <dbReference type="HAMAP-Rule" id="MF_01696"/>
    </source>
</evidence>
<accession>Q9CBX4</accession>
<feature type="chain" id="PRO_0000400198" description="1D-myo-inositol 2-acetamido-2-deoxy-alpha-D-glucopyranoside deacetylase">
    <location>
        <begin position="1"/>
        <end position="308"/>
    </location>
</feature>
<feature type="binding site" evidence="1">
    <location>
        <position position="13"/>
    </location>
    <ligand>
        <name>Zn(2+)</name>
        <dbReference type="ChEBI" id="CHEBI:29105"/>
    </ligand>
</feature>
<feature type="binding site" evidence="1">
    <location>
        <position position="16"/>
    </location>
    <ligand>
        <name>Zn(2+)</name>
        <dbReference type="ChEBI" id="CHEBI:29105"/>
    </ligand>
</feature>
<feature type="binding site" evidence="1">
    <location>
        <position position="147"/>
    </location>
    <ligand>
        <name>Zn(2+)</name>
        <dbReference type="ChEBI" id="CHEBI:29105"/>
    </ligand>
</feature>
<protein>
    <recommendedName>
        <fullName evidence="1">1D-myo-inositol 2-acetamido-2-deoxy-alpha-D-glucopyranoside deacetylase</fullName>
        <shortName evidence="1">GlcNAc-Ins deacetylase</shortName>
        <ecNumber evidence="1">3.5.1.103</ecNumber>
    </recommendedName>
    <alternativeName>
        <fullName>N-acetyl-1-D-myo-inositol 2-amino-2-deoxy-alpha-D-glucopyranoside deacetylase</fullName>
    </alternativeName>
</protein>
<dbReference type="EC" id="3.5.1.103" evidence="1"/>
<dbReference type="EMBL" id="AL583922">
    <property type="protein sequence ID" value="CAC30445.1"/>
    <property type="molecule type" value="Genomic_DNA"/>
</dbReference>
<dbReference type="PIR" id="H87095">
    <property type="entry name" value="H87095"/>
</dbReference>
<dbReference type="RefSeq" id="NP_302050.1">
    <property type="nucleotide sequence ID" value="NC_002677.1"/>
</dbReference>
<dbReference type="RefSeq" id="WP_010908371.1">
    <property type="nucleotide sequence ID" value="NC_002677.1"/>
</dbReference>
<dbReference type="SMR" id="Q9CBX4"/>
<dbReference type="STRING" id="272631.gene:17575335"/>
<dbReference type="KEGG" id="mle:ML1495"/>
<dbReference type="PATRIC" id="fig|272631.5.peg.2806"/>
<dbReference type="Leproma" id="ML1495"/>
<dbReference type="eggNOG" id="COG2120">
    <property type="taxonomic scope" value="Bacteria"/>
</dbReference>
<dbReference type="HOGENOM" id="CLU_049311_2_1_11"/>
<dbReference type="OrthoDB" id="158614at2"/>
<dbReference type="Proteomes" id="UP000000806">
    <property type="component" value="Chromosome"/>
</dbReference>
<dbReference type="GO" id="GO:0035595">
    <property type="term" value="F:N-acetylglucosaminylinositol deacetylase activity"/>
    <property type="evidence" value="ECO:0007669"/>
    <property type="project" value="UniProtKB-EC"/>
</dbReference>
<dbReference type="GO" id="GO:0008270">
    <property type="term" value="F:zinc ion binding"/>
    <property type="evidence" value="ECO:0007669"/>
    <property type="project" value="UniProtKB-UniRule"/>
</dbReference>
<dbReference type="GO" id="GO:0010125">
    <property type="term" value="P:mycothiol biosynthetic process"/>
    <property type="evidence" value="ECO:0007669"/>
    <property type="project" value="UniProtKB-UniRule"/>
</dbReference>
<dbReference type="Gene3D" id="3.40.50.10320">
    <property type="entry name" value="LmbE-like"/>
    <property type="match status" value="1"/>
</dbReference>
<dbReference type="HAMAP" id="MF_01696">
    <property type="entry name" value="MshB"/>
    <property type="match status" value="1"/>
</dbReference>
<dbReference type="InterPro" id="IPR003737">
    <property type="entry name" value="GlcNAc_PI_deacetylase-related"/>
</dbReference>
<dbReference type="InterPro" id="IPR024078">
    <property type="entry name" value="LmbE-like_dom_sf"/>
</dbReference>
<dbReference type="InterPro" id="IPR017810">
    <property type="entry name" value="Mycothiol_biosynthesis_MshB"/>
</dbReference>
<dbReference type="NCBIfam" id="TIGR03445">
    <property type="entry name" value="mycothiol_MshB"/>
    <property type="match status" value="1"/>
</dbReference>
<dbReference type="PANTHER" id="PTHR12993:SF26">
    <property type="entry name" value="1D-MYO-INOSITOL 2-ACETAMIDO-2-DEOXY-ALPHA-D-GLUCOPYRANOSIDE DEACETYLASE"/>
    <property type="match status" value="1"/>
</dbReference>
<dbReference type="PANTHER" id="PTHR12993">
    <property type="entry name" value="N-ACETYLGLUCOSAMINYL-PHOSPHATIDYLINOSITOL DE-N-ACETYLASE-RELATED"/>
    <property type="match status" value="1"/>
</dbReference>
<dbReference type="Pfam" id="PF02585">
    <property type="entry name" value="PIG-L"/>
    <property type="match status" value="1"/>
</dbReference>
<dbReference type="SUPFAM" id="SSF102588">
    <property type="entry name" value="LmbE-like"/>
    <property type="match status" value="1"/>
</dbReference>
<name>MSHB_MYCLE</name>
<gene>
    <name evidence="1" type="primary">mshB</name>
    <name type="ordered locus">ML1495</name>
</gene>
<comment type="function">
    <text evidence="1">Catalyzes the deacetylation of 1D-myo-inositol 2-acetamido-2-deoxy-alpha-D-glucopyranoside (GlcNAc-Ins) in the mycothiol biosynthesis pathway.</text>
</comment>
<comment type="catalytic activity">
    <reaction evidence="1">
        <text>1D-myo-inositol 2-acetamido-2-deoxy-alpha-D-glucopyranoside + H2O = 1D-myo-inositol 2-amino-2-deoxy-alpha-D-glucopyranoside + acetate</text>
        <dbReference type="Rhea" id="RHEA:26180"/>
        <dbReference type="ChEBI" id="CHEBI:15377"/>
        <dbReference type="ChEBI" id="CHEBI:30089"/>
        <dbReference type="ChEBI" id="CHEBI:52442"/>
        <dbReference type="ChEBI" id="CHEBI:58886"/>
        <dbReference type="EC" id="3.5.1.103"/>
    </reaction>
</comment>
<comment type="cofactor">
    <cofactor evidence="1">
        <name>Zn(2+)</name>
        <dbReference type="ChEBI" id="CHEBI:29105"/>
    </cofactor>
    <text evidence="1">Binds 1 zinc ion per subunit.</text>
</comment>
<comment type="similarity">
    <text evidence="1">Belongs to the MshB deacetylase family.</text>
</comment>
<reference key="1">
    <citation type="journal article" date="2001" name="Nature">
        <title>Massive gene decay in the leprosy bacillus.</title>
        <authorList>
            <person name="Cole S.T."/>
            <person name="Eiglmeier K."/>
            <person name="Parkhill J."/>
            <person name="James K.D."/>
            <person name="Thomson N.R."/>
            <person name="Wheeler P.R."/>
            <person name="Honore N."/>
            <person name="Garnier T."/>
            <person name="Churcher C.M."/>
            <person name="Harris D.E."/>
            <person name="Mungall K.L."/>
            <person name="Basham D."/>
            <person name="Brown D."/>
            <person name="Chillingworth T."/>
            <person name="Connor R."/>
            <person name="Davies R.M."/>
            <person name="Devlin K."/>
            <person name="Duthoy S."/>
            <person name="Feltwell T."/>
            <person name="Fraser A."/>
            <person name="Hamlin N."/>
            <person name="Holroyd S."/>
            <person name="Hornsby T."/>
            <person name="Jagels K."/>
            <person name="Lacroix C."/>
            <person name="Maclean J."/>
            <person name="Moule S."/>
            <person name="Murphy L.D."/>
            <person name="Oliver K."/>
            <person name="Quail M.A."/>
            <person name="Rajandream M.A."/>
            <person name="Rutherford K.M."/>
            <person name="Rutter S."/>
            <person name="Seeger K."/>
            <person name="Simon S."/>
            <person name="Simmonds M."/>
            <person name="Skelton J."/>
            <person name="Squares R."/>
            <person name="Squares S."/>
            <person name="Stevens K."/>
            <person name="Taylor K."/>
            <person name="Whitehead S."/>
            <person name="Woodward J.R."/>
            <person name="Barrell B.G."/>
        </authorList>
    </citation>
    <scope>NUCLEOTIDE SEQUENCE [LARGE SCALE GENOMIC DNA]</scope>
    <source>
        <strain>TN</strain>
    </source>
</reference>
<keyword id="KW-0378">Hydrolase</keyword>
<keyword id="KW-0479">Metal-binding</keyword>
<keyword id="KW-1185">Reference proteome</keyword>
<keyword id="KW-0862">Zinc</keyword>
<proteinExistence type="inferred from homology"/>
<sequence>MSETPRLLFVHAHPDDESLSNGATIAHYTSRGAQVQVVTCTLGEEGEVIGDRWAELTVDHADQLGGYRIFELTEALRALGVSAPIYLGGAGRWRDSGMRGTAPRRRQRFIDADENEAVGALVAIIRELRPHVVVTYDPHGGYGHPDHVHTHFITAAAVASSGVAAGLEVGADEYPGKPWKVPKFYWSVFALSAFEAGMNALQGKDLRPEWTIPPREEFYFGYSDKDIDAVVEATSDVWAAKTAALTAHATQVVVGPTGRACALSNNMVMPIFAQEHYVLAAGSAGNRDERGWETDLLAGLCLDGFDAR</sequence>
<organism>
    <name type="scientific">Mycobacterium leprae (strain TN)</name>
    <dbReference type="NCBI Taxonomy" id="272631"/>
    <lineage>
        <taxon>Bacteria</taxon>
        <taxon>Bacillati</taxon>
        <taxon>Actinomycetota</taxon>
        <taxon>Actinomycetes</taxon>
        <taxon>Mycobacteriales</taxon>
        <taxon>Mycobacteriaceae</taxon>
        <taxon>Mycobacterium</taxon>
    </lineage>
</organism>